<name>RS2_BUCA5</name>
<gene>
    <name evidence="1" type="primary">rpsB</name>
    <name type="ordered locus">BUAP5A_226</name>
</gene>
<evidence type="ECO:0000255" key="1">
    <source>
        <dbReference type="HAMAP-Rule" id="MF_00291"/>
    </source>
</evidence>
<evidence type="ECO:0000305" key="2"/>
<dbReference type="EMBL" id="CP001161">
    <property type="protein sequence ID" value="ACL30599.1"/>
    <property type="molecule type" value="Genomic_DNA"/>
</dbReference>
<dbReference type="RefSeq" id="WP_009874187.1">
    <property type="nucleotide sequence ID" value="NC_011833.1"/>
</dbReference>
<dbReference type="SMR" id="B8D928"/>
<dbReference type="KEGG" id="bap:BUAP5A_226"/>
<dbReference type="HOGENOM" id="CLU_040318_1_0_6"/>
<dbReference type="OrthoDB" id="9808036at2"/>
<dbReference type="Proteomes" id="UP000006904">
    <property type="component" value="Chromosome"/>
</dbReference>
<dbReference type="GO" id="GO:0022627">
    <property type="term" value="C:cytosolic small ribosomal subunit"/>
    <property type="evidence" value="ECO:0007669"/>
    <property type="project" value="TreeGrafter"/>
</dbReference>
<dbReference type="GO" id="GO:0003735">
    <property type="term" value="F:structural constituent of ribosome"/>
    <property type="evidence" value="ECO:0007669"/>
    <property type="project" value="InterPro"/>
</dbReference>
<dbReference type="GO" id="GO:0006412">
    <property type="term" value="P:translation"/>
    <property type="evidence" value="ECO:0007669"/>
    <property type="project" value="UniProtKB-UniRule"/>
</dbReference>
<dbReference type="CDD" id="cd01425">
    <property type="entry name" value="RPS2"/>
    <property type="match status" value="1"/>
</dbReference>
<dbReference type="FunFam" id="1.10.287.610:FF:000001">
    <property type="entry name" value="30S ribosomal protein S2"/>
    <property type="match status" value="1"/>
</dbReference>
<dbReference type="Gene3D" id="3.40.50.10490">
    <property type="entry name" value="Glucose-6-phosphate isomerase like protein, domain 1"/>
    <property type="match status" value="1"/>
</dbReference>
<dbReference type="Gene3D" id="1.10.287.610">
    <property type="entry name" value="Helix hairpin bin"/>
    <property type="match status" value="1"/>
</dbReference>
<dbReference type="HAMAP" id="MF_00291_B">
    <property type="entry name" value="Ribosomal_uS2_B"/>
    <property type="match status" value="1"/>
</dbReference>
<dbReference type="InterPro" id="IPR001865">
    <property type="entry name" value="Ribosomal_uS2"/>
</dbReference>
<dbReference type="InterPro" id="IPR005706">
    <property type="entry name" value="Ribosomal_uS2_bac/mit/plastid"/>
</dbReference>
<dbReference type="InterPro" id="IPR018130">
    <property type="entry name" value="Ribosomal_uS2_CS"/>
</dbReference>
<dbReference type="InterPro" id="IPR023591">
    <property type="entry name" value="Ribosomal_uS2_flav_dom_sf"/>
</dbReference>
<dbReference type="NCBIfam" id="TIGR01011">
    <property type="entry name" value="rpsB_bact"/>
    <property type="match status" value="1"/>
</dbReference>
<dbReference type="PANTHER" id="PTHR12534">
    <property type="entry name" value="30S RIBOSOMAL PROTEIN S2 PROKARYOTIC AND ORGANELLAR"/>
    <property type="match status" value="1"/>
</dbReference>
<dbReference type="PANTHER" id="PTHR12534:SF0">
    <property type="entry name" value="SMALL RIBOSOMAL SUBUNIT PROTEIN US2M"/>
    <property type="match status" value="1"/>
</dbReference>
<dbReference type="Pfam" id="PF00318">
    <property type="entry name" value="Ribosomal_S2"/>
    <property type="match status" value="1"/>
</dbReference>
<dbReference type="PRINTS" id="PR00395">
    <property type="entry name" value="RIBOSOMALS2"/>
</dbReference>
<dbReference type="SUPFAM" id="SSF52313">
    <property type="entry name" value="Ribosomal protein S2"/>
    <property type="match status" value="1"/>
</dbReference>
<dbReference type="PROSITE" id="PS00962">
    <property type="entry name" value="RIBOSOMAL_S2_1"/>
    <property type="match status" value="1"/>
</dbReference>
<dbReference type="PROSITE" id="PS00963">
    <property type="entry name" value="RIBOSOMAL_S2_2"/>
    <property type="match status" value="1"/>
</dbReference>
<sequence>MEIVSMREMLKAGVHFGHQTRYWNPKMKPFIFGIRNRVHIINLEKTLPMFHFALSELKKIALKKGRILFVGTKKAASKGIKEVAINCEQFYVNHRWLGGMLTNWKTVRQSIKRLKDLEIESKDGTFSKLTKKEALIRSRELFKLENSLGGIKNMGGLPDCLFVIDAAHENIAITEANNLGIPVFSIVDTNSNPDGVDYIIPGNDDAIRSVNLYLKSIMLTISKINNQNSLDKVFIDTKNSTNIE</sequence>
<reference key="1">
    <citation type="journal article" date="2009" name="Science">
        <title>The dynamics and time scale of ongoing genomic erosion in symbiotic bacteria.</title>
        <authorList>
            <person name="Moran N.A."/>
            <person name="McLaughlin H.J."/>
            <person name="Sorek R."/>
        </authorList>
    </citation>
    <scope>NUCLEOTIDE SEQUENCE [LARGE SCALE GENOMIC DNA]</scope>
    <source>
        <strain>5A</strain>
    </source>
</reference>
<proteinExistence type="inferred from homology"/>
<protein>
    <recommendedName>
        <fullName evidence="1">Small ribosomal subunit protein uS2</fullName>
    </recommendedName>
    <alternativeName>
        <fullName evidence="2">30S ribosomal protein S2</fullName>
    </alternativeName>
</protein>
<keyword id="KW-0687">Ribonucleoprotein</keyword>
<keyword id="KW-0689">Ribosomal protein</keyword>
<organism>
    <name type="scientific">Buchnera aphidicola subsp. Acyrthosiphon pisum (strain 5A)</name>
    <dbReference type="NCBI Taxonomy" id="563178"/>
    <lineage>
        <taxon>Bacteria</taxon>
        <taxon>Pseudomonadati</taxon>
        <taxon>Pseudomonadota</taxon>
        <taxon>Gammaproteobacteria</taxon>
        <taxon>Enterobacterales</taxon>
        <taxon>Erwiniaceae</taxon>
        <taxon>Buchnera</taxon>
    </lineage>
</organism>
<comment type="similarity">
    <text evidence="1">Belongs to the universal ribosomal protein uS2 family.</text>
</comment>
<feature type="chain" id="PRO_1000194324" description="Small ribosomal subunit protein uS2">
    <location>
        <begin position="1"/>
        <end position="244"/>
    </location>
</feature>
<accession>B8D928</accession>